<protein>
    <recommendedName>
        <fullName>Uncharacterized protein YOR032W-A</fullName>
    </recommendedName>
</protein>
<organism>
    <name type="scientific">Saccharomyces cerevisiae (strain ATCC 204508 / S288c)</name>
    <name type="common">Baker's yeast</name>
    <dbReference type="NCBI Taxonomy" id="559292"/>
    <lineage>
        <taxon>Eukaryota</taxon>
        <taxon>Fungi</taxon>
        <taxon>Dikarya</taxon>
        <taxon>Ascomycota</taxon>
        <taxon>Saccharomycotina</taxon>
        <taxon>Saccharomycetes</taxon>
        <taxon>Saccharomycetales</taxon>
        <taxon>Saccharomycetaceae</taxon>
        <taxon>Saccharomyces</taxon>
    </lineage>
</organism>
<sequence>MRRALFIAGQTYLWLNLTHLLLIFSWSSTMAFSQSRRLLTPTVPCPTLLGIDFLILVLRHFDEIFI</sequence>
<name>YO032_YEAST</name>
<evidence type="ECO:0000255" key="1"/>
<evidence type="ECO:0000305" key="2"/>
<comment type="subcellular location">
    <subcellularLocation>
        <location evidence="2">Membrane</location>
        <topology evidence="2">Multi-pass membrane protein</topology>
    </subcellularLocation>
</comment>
<feature type="chain" id="PRO_0000237645" description="Uncharacterized protein YOR032W-A">
    <location>
        <begin position="1"/>
        <end position="66"/>
    </location>
</feature>
<feature type="transmembrane region" description="Helical" evidence="1">
    <location>
        <begin position="4"/>
        <end position="24"/>
    </location>
</feature>
<feature type="transmembrane region" description="Helical" evidence="1">
    <location>
        <begin position="38"/>
        <end position="58"/>
    </location>
</feature>
<keyword id="KW-0472">Membrane</keyword>
<keyword id="KW-1185">Reference proteome</keyword>
<keyword id="KW-0812">Transmembrane</keyword>
<keyword id="KW-1133">Transmembrane helix</keyword>
<gene>
    <name type="ordered locus">YOR032W-A</name>
</gene>
<accession>Q8TGS1</accession>
<accession>D6W298</accession>
<proteinExistence type="predicted"/>
<dbReference type="EMBL" id="X87331">
    <property type="status" value="NOT_ANNOTATED_CDS"/>
    <property type="molecule type" value="Genomic_DNA"/>
</dbReference>
<dbReference type="EMBL" id="Z74941">
    <property type="status" value="NOT_ANNOTATED_CDS"/>
    <property type="molecule type" value="Genomic_DNA"/>
</dbReference>
<dbReference type="EMBL" id="AF479914">
    <property type="protein sequence ID" value="AAL79227.1"/>
    <property type="molecule type" value="Genomic_DNA"/>
</dbReference>
<dbReference type="EMBL" id="BK006948">
    <property type="protein sequence ID" value="DAA10814.1"/>
    <property type="molecule type" value="Genomic_DNA"/>
</dbReference>
<dbReference type="RefSeq" id="NP_878169.1">
    <property type="nucleotide sequence ID" value="NM_001184624.1"/>
</dbReference>
<dbReference type="BioGRID" id="37023">
    <property type="interactions" value="65"/>
</dbReference>
<dbReference type="FunCoup" id="Q8TGS1">
    <property type="interactions" value="37"/>
</dbReference>
<dbReference type="PaxDb" id="4932-YOR032W-A"/>
<dbReference type="EnsemblFungi" id="YOR032W-A_mRNA">
    <property type="protein sequence ID" value="YOR032W-A"/>
    <property type="gene ID" value="YOR032W-A"/>
</dbReference>
<dbReference type="GeneID" id="1466481"/>
<dbReference type="KEGG" id="sce:YOR032W-A"/>
<dbReference type="AGR" id="SGD:S000028710"/>
<dbReference type="SGD" id="S000028710">
    <property type="gene designation" value="YOR032W-A"/>
</dbReference>
<dbReference type="VEuPathDB" id="FungiDB:YOR032W-A"/>
<dbReference type="HOGENOM" id="CLU_2832611_0_0_1"/>
<dbReference type="InParanoid" id="Q8TGS1"/>
<dbReference type="BioCyc" id="YEAST:G3O-33907-MONOMER"/>
<dbReference type="BioGRID-ORCS" id="1466481">
    <property type="hits" value="0 hits in 10 CRISPR screens"/>
</dbReference>
<dbReference type="PRO" id="PR:Q8TGS1"/>
<dbReference type="Proteomes" id="UP000002311">
    <property type="component" value="Chromosome XV"/>
</dbReference>
<dbReference type="RNAct" id="Q8TGS1">
    <property type="molecule type" value="protein"/>
</dbReference>
<dbReference type="GO" id="GO:0005783">
    <property type="term" value="C:endoplasmic reticulum"/>
    <property type="evidence" value="ECO:0007005"/>
    <property type="project" value="SGD"/>
</dbReference>
<dbReference type="GO" id="GO:0016020">
    <property type="term" value="C:membrane"/>
    <property type="evidence" value="ECO:0007669"/>
    <property type="project" value="UniProtKB-SubCell"/>
</dbReference>
<reference key="1">
    <citation type="journal article" date="1997" name="Nature">
        <title>The nucleotide sequence of Saccharomyces cerevisiae chromosome XV.</title>
        <authorList>
            <person name="Dujon B."/>
            <person name="Albermann K."/>
            <person name="Aldea M."/>
            <person name="Alexandraki D."/>
            <person name="Ansorge W."/>
            <person name="Arino J."/>
            <person name="Benes V."/>
            <person name="Bohn C."/>
            <person name="Bolotin-Fukuhara M."/>
            <person name="Bordonne R."/>
            <person name="Boyer J."/>
            <person name="Camasses A."/>
            <person name="Casamayor A."/>
            <person name="Casas C."/>
            <person name="Cheret G."/>
            <person name="Cziepluch C."/>
            <person name="Daignan-Fornier B."/>
            <person name="Dang V.-D."/>
            <person name="de Haan M."/>
            <person name="Delius H."/>
            <person name="Durand P."/>
            <person name="Fairhead C."/>
            <person name="Feldmann H."/>
            <person name="Gaillon L."/>
            <person name="Galisson F."/>
            <person name="Gamo F.-J."/>
            <person name="Gancedo C."/>
            <person name="Goffeau A."/>
            <person name="Goulding S.E."/>
            <person name="Grivell L.A."/>
            <person name="Habbig B."/>
            <person name="Hand N.J."/>
            <person name="Hani J."/>
            <person name="Hattenhorst U."/>
            <person name="Hebling U."/>
            <person name="Hernando Y."/>
            <person name="Herrero E."/>
            <person name="Heumann K."/>
            <person name="Hiesel R."/>
            <person name="Hilger F."/>
            <person name="Hofmann B."/>
            <person name="Hollenberg C.P."/>
            <person name="Hughes B."/>
            <person name="Jauniaux J.-C."/>
            <person name="Kalogeropoulos A."/>
            <person name="Katsoulou C."/>
            <person name="Kordes E."/>
            <person name="Lafuente M.J."/>
            <person name="Landt O."/>
            <person name="Louis E.J."/>
            <person name="Maarse A.C."/>
            <person name="Madania A."/>
            <person name="Mannhaupt G."/>
            <person name="Marck C."/>
            <person name="Martin R.P."/>
            <person name="Mewes H.-W."/>
            <person name="Michaux G."/>
            <person name="Paces V."/>
            <person name="Parle-McDermott A.G."/>
            <person name="Pearson B.M."/>
            <person name="Perrin A."/>
            <person name="Pettersson B."/>
            <person name="Poch O."/>
            <person name="Pohl T.M."/>
            <person name="Poirey R."/>
            <person name="Portetelle D."/>
            <person name="Pujol A."/>
            <person name="Purnelle B."/>
            <person name="Ramezani Rad M."/>
            <person name="Rechmann S."/>
            <person name="Schwager C."/>
            <person name="Schweizer M."/>
            <person name="Sor F."/>
            <person name="Sterky F."/>
            <person name="Tarassov I.A."/>
            <person name="Teodoru C."/>
            <person name="Tettelin H."/>
            <person name="Thierry A."/>
            <person name="Tobiasch E."/>
            <person name="Tzermia M."/>
            <person name="Uhlen M."/>
            <person name="Unseld M."/>
            <person name="Valens M."/>
            <person name="Vandenbol M."/>
            <person name="Vetter I."/>
            <person name="Vlcek C."/>
            <person name="Voet M."/>
            <person name="Volckaert G."/>
            <person name="Voss H."/>
            <person name="Wambutt R."/>
            <person name="Wedler H."/>
            <person name="Wiemann S."/>
            <person name="Winsor B."/>
            <person name="Wolfe K.H."/>
            <person name="Zollner A."/>
            <person name="Zumstein E."/>
            <person name="Kleine K."/>
        </authorList>
    </citation>
    <scope>NUCLEOTIDE SEQUENCE [LARGE SCALE GENOMIC DNA]</scope>
    <source>
        <strain>ATCC 204508 / S288c</strain>
    </source>
</reference>
<reference key="2">
    <citation type="journal article" date="2014" name="G3 (Bethesda)">
        <title>The reference genome sequence of Saccharomyces cerevisiae: Then and now.</title>
        <authorList>
            <person name="Engel S.R."/>
            <person name="Dietrich F.S."/>
            <person name="Fisk D.G."/>
            <person name="Binkley G."/>
            <person name="Balakrishnan R."/>
            <person name="Costanzo M.C."/>
            <person name="Dwight S.S."/>
            <person name="Hitz B.C."/>
            <person name="Karra K."/>
            <person name="Nash R.S."/>
            <person name="Weng S."/>
            <person name="Wong E.D."/>
            <person name="Lloyd P."/>
            <person name="Skrzypek M.S."/>
            <person name="Miyasato S.R."/>
            <person name="Simison M."/>
            <person name="Cherry J.M."/>
        </authorList>
    </citation>
    <scope>GENOME REANNOTATION</scope>
    <source>
        <strain>ATCC 204508 / S288c</strain>
    </source>
</reference>
<reference key="3">
    <citation type="journal article" date="2002" name="Nat. Biotechnol.">
        <title>An integrated approach for finding overlooked genes in yeast.</title>
        <authorList>
            <person name="Kumar A."/>
            <person name="Harrison P.M."/>
            <person name="Cheung K.-H."/>
            <person name="Lan N."/>
            <person name="Echols N."/>
            <person name="Bertone P."/>
            <person name="Miller P."/>
            <person name="Gerstein M.B."/>
            <person name="Snyder M."/>
        </authorList>
    </citation>
    <scope>NUCLEOTIDE SEQUENCE [GENOMIC DNA]</scope>
</reference>